<comment type="function">
    <text evidence="1">Transaldolase is important for the balance of metabolites in the pentose-phosphate pathway.</text>
</comment>
<comment type="catalytic activity">
    <reaction evidence="1">
        <text>D-sedoheptulose 7-phosphate + D-glyceraldehyde 3-phosphate = D-erythrose 4-phosphate + beta-D-fructose 6-phosphate</text>
        <dbReference type="Rhea" id="RHEA:17053"/>
        <dbReference type="ChEBI" id="CHEBI:16897"/>
        <dbReference type="ChEBI" id="CHEBI:57483"/>
        <dbReference type="ChEBI" id="CHEBI:57634"/>
        <dbReference type="ChEBI" id="CHEBI:59776"/>
        <dbReference type="EC" id="2.2.1.2"/>
    </reaction>
</comment>
<comment type="pathway">
    <text evidence="1">Carbohydrate degradation; pentose phosphate pathway; D-glyceraldehyde 3-phosphate and beta-D-fructose 6-phosphate from D-ribose 5-phosphate and D-xylulose 5-phosphate (non-oxidative stage): step 2/3.</text>
</comment>
<comment type="subcellular location">
    <subcellularLocation>
        <location evidence="1">Cytoplasm</location>
    </subcellularLocation>
</comment>
<comment type="similarity">
    <text evidence="1">Belongs to the transaldolase family. Type 3B subfamily.</text>
</comment>
<accession>Q81B21</accession>
<organism>
    <name type="scientific">Bacillus cereus (strain ATCC 14579 / DSM 31 / CCUG 7414 / JCM 2152 / NBRC 15305 / NCIMB 9373 / NCTC 2599 / NRRL B-3711)</name>
    <dbReference type="NCBI Taxonomy" id="226900"/>
    <lineage>
        <taxon>Bacteria</taxon>
        <taxon>Bacillati</taxon>
        <taxon>Bacillota</taxon>
        <taxon>Bacilli</taxon>
        <taxon>Bacillales</taxon>
        <taxon>Bacillaceae</taxon>
        <taxon>Bacillus</taxon>
        <taxon>Bacillus cereus group</taxon>
    </lineage>
</organism>
<dbReference type="EC" id="2.2.1.2" evidence="1"/>
<dbReference type="EMBL" id="AE016877">
    <property type="protein sequence ID" value="AAP10311.1"/>
    <property type="molecule type" value="Genomic_DNA"/>
</dbReference>
<dbReference type="RefSeq" id="NP_833110.1">
    <property type="nucleotide sequence ID" value="NC_004722.1"/>
</dbReference>
<dbReference type="RefSeq" id="WP_001210267.1">
    <property type="nucleotide sequence ID" value="NC_004722.1"/>
</dbReference>
<dbReference type="SMR" id="Q81B21"/>
<dbReference type="STRING" id="226900.BC_3371"/>
<dbReference type="KEGG" id="bce:BC3371"/>
<dbReference type="PATRIC" id="fig|226900.8.peg.3457"/>
<dbReference type="HOGENOM" id="CLU_079764_0_0_9"/>
<dbReference type="UniPathway" id="UPA00115">
    <property type="reaction ID" value="UER00414"/>
</dbReference>
<dbReference type="Proteomes" id="UP000001417">
    <property type="component" value="Chromosome"/>
</dbReference>
<dbReference type="GO" id="GO:0005737">
    <property type="term" value="C:cytoplasm"/>
    <property type="evidence" value="ECO:0007669"/>
    <property type="project" value="UniProtKB-SubCell"/>
</dbReference>
<dbReference type="GO" id="GO:0016832">
    <property type="term" value="F:aldehyde-lyase activity"/>
    <property type="evidence" value="ECO:0007669"/>
    <property type="project" value="InterPro"/>
</dbReference>
<dbReference type="GO" id="GO:0004801">
    <property type="term" value="F:transaldolase activity"/>
    <property type="evidence" value="ECO:0007669"/>
    <property type="project" value="UniProtKB-UniRule"/>
</dbReference>
<dbReference type="GO" id="GO:0005975">
    <property type="term" value="P:carbohydrate metabolic process"/>
    <property type="evidence" value="ECO:0007669"/>
    <property type="project" value="InterPro"/>
</dbReference>
<dbReference type="GO" id="GO:0006098">
    <property type="term" value="P:pentose-phosphate shunt"/>
    <property type="evidence" value="ECO:0007669"/>
    <property type="project" value="UniProtKB-UniRule"/>
</dbReference>
<dbReference type="CDD" id="cd00956">
    <property type="entry name" value="Transaldolase_FSA"/>
    <property type="match status" value="1"/>
</dbReference>
<dbReference type="FunFam" id="3.20.20.70:FF:000018">
    <property type="entry name" value="Probable transaldolase"/>
    <property type="match status" value="1"/>
</dbReference>
<dbReference type="Gene3D" id="3.20.20.70">
    <property type="entry name" value="Aldolase class I"/>
    <property type="match status" value="1"/>
</dbReference>
<dbReference type="HAMAP" id="MF_00494">
    <property type="entry name" value="Transaldolase_3b"/>
    <property type="match status" value="1"/>
</dbReference>
<dbReference type="InterPro" id="IPR013785">
    <property type="entry name" value="Aldolase_TIM"/>
</dbReference>
<dbReference type="InterPro" id="IPR001585">
    <property type="entry name" value="TAL/FSA"/>
</dbReference>
<dbReference type="InterPro" id="IPR022999">
    <property type="entry name" value="Transaldolase_3B"/>
</dbReference>
<dbReference type="InterPro" id="IPR004731">
    <property type="entry name" value="Transaldolase_3B/F6P_aldolase"/>
</dbReference>
<dbReference type="InterPro" id="IPR018225">
    <property type="entry name" value="Transaldolase_AS"/>
</dbReference>
<dbReference type="InterPro" id="IPR033919">
    <property type="entry name" value="TSA/FSA_arc/bac"/>
</dbReference>
<dbReference type="NCBIfam" id="TIGR00875">
    <property type="entry name" value="fsa_talC_mipB"/>
    <property type="match status" value="1"/>
</dbReference>
<dbReference type="PANTHER" id="PTHR10683">
    <property type="entry name" value="TRANSALDOLASE"/>
    <property type="match status" value="1"/>
</dbReference>
<dbReference type="PANTHER" id="PTHR10683:SF36">
    <property type="entry name" value="TRANSALDOLASE"/>
    <property type="match status" value="1"/>
</dbReference>
<dbReference type="Pfam" id="PF00923">
    <property type="entry name" value="TAL_FSA"/>
    <property type="match status" value="1"/>
</dbReference>
<dbReference type="SUPFAM" id="SSF51569">
    <property type="entry name" value="Aldolase"/>
    <property type="match status" value="1"/>
</dbReference>
<dbReference type="PROSITE" id="PS01054">
    <property type="entry name" value="TRANSALDOLASE_1"/>
    <property type="match status" value="1"/>
</dbReference>
<dbReference type="PROSITE" id="PS00958">
    <property type="entry name" value="TRANSALDOLASE_2"/>
    <property type="match status" value="1"/>
</dbReference>
<evidence type="ECO:0000255" key="1">
    <source>
        <dbReference type="HAMAP-Rule" id="MF_00494"/>
    </source>
</evidence>
<name>TAL2_BACCR</name>
<gene>
    <name evidence="1" type="primary">tal2</name>
    <name type="ordered locus">BC_3371</name>
</gene>
<protein>
    <recommendedName>
        <fullName evidence="1">Probable transaldolase 2</fullName>
        <ecNumber evidence="1">2.2.1.2</ecNumber>
    </recommendedName>
</protein>
<proteinExistence type="inferred from homology"/>
<feature type="chain" id="PRO_0000173656" description="Probable transaldolase 2">
    <location>
        <begin position="1"/>
        <end position="222"/>
    </location>
</feature>
<feature type="active site" description="Schiff-base intermediate with substrate" evidence="1">
    <location>
        <position position="90"/>
    </location>
</feature>
<keyword id="KW-0963">Cytoplasm</keyword>
<keyword id="KW-0570">Pentose shunt</keyword>
<keyword id="KW-1185">Reference proteome</keyword>
<keyword id="KW-0704">Schiff base</keyword>
<keyword id="KW-0808">Transferase</keyword>
<sequence length="222" mass="24007">MRFFIDTANLEDIKKAYKLGVLAGVTTNPSLVAKEGVKFEDRIAEICQAVPKVESVSAEVTPDAVTAEEMIAQAEELIKINGGDKNVTIKLPMTLAGLEACRYLTEKGVKTNVTLIFTVNQALLAARAGATYVSPFLGRLDDISEDGVLLVAKIAELFDVHQLDTQIIAASVRHPDHVTRVAMAGAHIATIPYKVIEQLAMHPLTDQGIEKFAADWAKAPKL</sequence>
<reference key="1">
    <citation type="journal article" date="2003" name="Nature">
        <title>Genome sequence of Bacillus cereus and comparative analysis with Bacillus anthracis.</title>
        <authorList>
            <person name="Ivanova N."/>
            <person name="Sorokin A."/>
            <person name="Anderson I."/>
            <person name="Galleron N."/>
            <person name="Candelon B."/>
            <person name="Kapatral V."/>
            <person name="Bhattacharyya A."/>
            <person name="Reznik G."/>
            <person name="Mikhailova N."/>
            <person name="Lapidus A."/>
            <person name="Chu L."/>
            <person name="Mazur M."/>
            <person name="Goltsman E."/>
            <person name="Larsen N."/>
            <person name="D'Souza M."/>
            <person name="Walunas T."/>
            <person name="Grechkin Y."/>
            <person name="Pusch G."/>
            <person name="Haselkorn R."/>
            <person name="Fonstein M."/>
            <person name="Ehrlich S.D."/>
            <person name="Overbeek R."/>
            <person name="Kyrpides N.C."/>
        </authorList>
    </citation>
    <scope>NUCLEOTIDE SEQUENCE [LARGE SCALE GENOMIC DNA]</scope>
    <source>
        <strain>ATCC 14579 / DSM 31 / CCUG 7414 / JCM 2152 / NBRC 15305 / NCIMB 9373 / NCTC 2599 / NRRL B-3711</strain>
    </source>
</reference>